<protein>
    <recommendedName>
        <fullName>Protein PA-X</fullName>
    </recommendedName>
</protein>
<name>PAX_I40A0</name>
<gene>
    <name type="primary">PA</name>
</gene>
<proteinExistence type="inferred from homology"/>
<reference key="1">
    <citation type="submission" date="2006-08" db="EMBL/GenBank/DDBJ databases">
        <title>The NIAID influenza genome sequencing project.</title>
        <authorList>
            <person name="Spiro D."/>
            <person name="Ghedin E."/>
            <person name="Sengamalay N."/>
            <person name="Halpin R."/>
            <person name="Boyne A."/>
            <person name="Zaborsky J."/>
            <person name="Feldblyum T."/>
            <person name="Subbu V."/>
            <person name="Sparenborg J."/>
            <person name="Shumway M."/>
            <person name="Sitz J."/>
            <person name="Katzel D."/>
            <person name="Koo H."/>
            <person name="Salzberg S.L."/>
            <person name="Griesemer S."/>
            <person name="St George K."/>
            <person name="Bennett R."/>
            <person name="Taylor J."/>
            <person name="Bennink J.R."/>
            <person name="Yewdell J.W."/>
            <person name="Bao Y."/>
            <person name="Bolotov P."/>
            <person name="Dernovoy D."/>
            <person name="Kiryutin B."/>
            <person name="Lipman D.J."/>
            <person name="Tatusova T."/>
        </authorList>
    </citation>
    <scope>NUCLEOTIDE SEQUENCE [GENOMIC RNA]</scope>
</reference>
<reference key="2">
    <citation type="submission" date="2006-09" db="EMBL/GenBank/DDBJ databases">
        <authorList>
            <consortium name="The NIAID Influenza Genome Sequencing Consortium"/>
        </authorList>
    </citation>
    <scope>NUCLEOTIDE SEQUENCE [GENOMIC RNA]</scope>
</reference>
<feature type="chain" id="PRO_0000419379" description="Protein PA-X">
    <location>
        <begin position="1"/>
        <end position="252"/>
    </location>
</feature>
<feature type="region of interest" description="Disordered" evidence="5">
    <location>
        <begin position="203"/>
        <end position="222"/>
    </location>
</feature>
<feature type="compositionally biased region" description="Polar residues" evidence="5">
    <location>
        <begin position="207"/>
        <end position="217"/>
    </location>
</feature>
<feature type="active site" evidence="2">
    <location>
        <position position="80"/>
    </location>
</feature>
<feature type="active site" evidence="2">
    <location>
        <position position="108"/>
    </location>
</feature>
<feature type="site" description="Important for efficient shutoff activity and nuclear localization" evidence="4">
    <location>
        <position position="195"/>
    </location>
</feature>
<feature type="site" description="Important for efficient shutoff activity and nuclear localization" evidence="4">
    <location>
        <position position="198"/>
    </location>
</feature>
<feature type="site" description="Important for efficient shutoff activity and nuclear localization" evidence="4">
    <location>
        <position position="199"/>
    </location>
</feature>
<feature type="site" description="Important for efficient shutoff activity" evidence="3">
    <location>
        <position position="202"/>
    </location>
</feature>
<feature type="site" description="Important for efficient shutoff activity" evidence="3">
    <location>
        <position position="203"/>
    </location>
</feature>
<feature type="site" description="Important for efficient shutoff activity" evidence="3">
    <location>
        <position position="206"/>
    </location>
</feature>
<organism>
    <name type="scientific">Influenza A virus (strain A/Hickox/1940 H1N1)</name>
    <dbReference type="NCBI Taxonomy" id="383543"/>
    <lineage>
        <taxon>Viruses</taxon>
        <taxon>Riboviria</taxon>
        <taxon>Orthornavirae</taxon>
        <taxon>Negarnaviricota</taxon>
        <taxon>Polyploviricotina</taxon>
        <taxon>Insthoviricetes</taxon>
        <taxon>Articulavirales</taxon>
        <taxon>Orthomyxoviridae</taxon>
        <taxon>Alphainfluenzavirus</taxon>
        <taxon>Alphainfluenzavirus influenzae</taxon>
        <taxon>Influenza A virus</taxon>
    </lineage>
</organism>
<sequence length="252" mass="29388">MEDFVRQCFNPMIVELAEKAMKEYGEDPKIETNKLAAICTHLEVCFMYSDFHFINEQGESIIVELGDPNALLKHRFEIIEGRDRTMAWTVVNSICNTTGAEKPKFLPDLYDYKENRFIEIGVTRREVHIYYLEKANKIKSEKTHIHIFSFTGEEMATKADYTLDEESRARIKTRLFTIRQEMASRGLWDSFVSPREAKRQLKKNLKSQEQCASSPTKVSRRTSPALRILEPMWMDSNRTATLRASFLKCPKK</sequence>
<accession>P0DJR6</accession>
<organismHost>
    <name type="scientific">Aves</name>
    <dbReference type="NCBI Taxonomy" id="8782"/>
</organismHost>
<organismHost>
    <name type="scientific">Homo sapiens</name>
    <name type="common">Human</name>
    <dbReference type="NCBI Taxonomy" id="9606"/>
</organismHost>
<organismHost>
    <name type="scientific">Sus scrofa</name>
    <name type="common">Pig</name>
    <dbReference type="NCBI Taxonomy" id="9823"/>
</organismHost>
<dbReference type="EMBL" id="CY013276">
    <property type="status" value="NOT_ANNOTATED_CDS"/>
    <property type="molecule type" value="Other_RNA"/>
</dbReference>
<dbReference type="SMR" id="P0DJR6"/>
<dbReference type="Proteomes" id="UP000156248">
    <property type="component" value="Genome"/>
</dbReference>
<dbReference type="GO" id="GO:0003723">
    <property type="term" value="F:RNA binding"/>
    <property type="evidence" value="ECO:0007669"/>
    <property type="project" value="InterPro"/>
</dbReference>
<dbReference type="GO" id="GO:0039694">
    <property type="term" value="P:viral RNA genome replication"/>
    <property type="evidence" value="ECO:0007669"/>
    <property type="project" value="InterPro"/>
</dbReference>
<dbReference type="GO" id="GO:0075523">
    <property type="term" value="P:viral translational frameshifting"/>
    <property type="evidence" value="ECO:0007669"/>
    <property type="project" value="UniProtKB-KW"/>
</dbReference>
<dbReference type="FunFam" id="3.40.91.90:FF:000001">
    <property type="entry name" value="Polymerase acidic protein"/>
    <property type="match status" value="1"/>
</dbReference>
<dbReference type="Gene3D" id="3.40.91.90">
    <property type="entry name" value="Influenza RNA-dependent RNA polymerase subunit PA, endonuclease domain"/>
    <property type="match status" value="1"/>
</dbReference>
<dbReference type="InterPro" id="IPR001009">
    <property type="entry name" value="PA/PA-X"/>
</dbReference>
<dbReference type="InterPro" id="IPR038372">
    <property type="entry name" value="PA/PA-X_sf"/>
</dbReference>
<dbReference type="Pfam" id="PF00603">
    <property type="entry name" value="Flu_PA"/>
    <property type="match status" value="1"/>
</dbReference>
<comment type="function">
    <text evidence="1 4">Plays a major role in the shutoff of the host protein expression by cleaving mRNAs probably via an endonuclease activity. This host shutoff allows the virus to escape from the host antiviral response (By similarity). Hijacks host RNA splicing machinery to selectively target host RNAs containing introns for destruction. This may explain the preferential degradation of RNAs that have undergone co- or post-transcriptional processing (By similarity).</text>
</comment>
<comment type="subcellular location">
    <subcellularLocation>
        <location evidence="4">Host cytoplasm</location>
    </subcellularLocation>
    <subcellularLocation>
        <location evidence="4">Host nucleus</location>
    </subcellularLocation>
</comment>
<comment type="alternative products">
    <event type="ribosomal frameshifting"/>
    <isoform>
        <id>P0DJR6-1</id>
        <name>PA-X</name>
        <sequence type="displayed"/>
    </isoform>
    <isoform>
        <id>Q0HD53-1</id>
        <name>PA</name>
        <sequence type="external"/>
    </isoform>
</comment>
<comment type="domain">
    <text evidence="1 4">The probable endonuclease active site in the N-terminus and the basic amino acid cluster in the C-terminus are important for the shutoff activity. The C-terminus acts as a nuclear localization signal (By similarity). The C-terminus is recruited to host protein complexes involved in nuclear Pol II RNA processing (By similarity).</text>
</comment>
<comment type="similarity">
    <text evidence="6">Belongs to the influenza viruses PA-X family.</text>
</comment>
<evidence type="ECO:0000250" key="1">
    <source>
        <dbReference type="UniProtKB" id="P0CK64"/>
    </source>
</evidence>
<evidence type="ECO:0000250" key="2">
    <source>
        <dbReference type="UniProtKB" id="P0CK68"/>
    </source>
</evidence>
<evidence type="ECO:0000250" key="3">
    <source>
        <dbReference type="UniProtKB" id="P0DJW8"/>
    </source>
</evidence>
<evidence type="ECO:0000250" key="4">
    <source>
        <dbReference type="UniProtKB" id="P0DXO5"/>
    </source>
</evidence>
<evidence type="ECO:0000256" key="5">
    <source>
        <dbReference type="SAM" id="MobiDB-lite"/>
    </source>
</evidence>
<evidence type="ECO:0000305" key="6"/>
<keyword id="KW-1132">Decay of host mRNAs by virus</keyword>
<keyword id="KW-1262">Eukaryotic host gene expression shutoff by virus</keyword>
<keyword id="KW-1035">Host cytoplasm</keyword>
<keyword id="KW-1190">Host gene expression shutoff by virus</keyword>
<keyword id="KW-1192">Host mRNA suppression by virus</keyword>
<keyword id="KW-1048">Host nucleus</keyword>
<keyword id="KW-0945">Host-virus interaction</keyword>
<keyword id="KW-0688">Ribosomal frameshifting</keyword>